<evidence type="ECO:0000255" key="1">
    <source>
        <dbReference type="HAMAP-Rule" id="MF_00454"/>
    </source>
</evidence>
<protein>
    <recommendedName>
        <fullName evidence="1">Fluoride-specific ion channel FluC</fullName>
    </recommendedName>
</protein>
<name>FLUC_ACIF5</name>
<sequence length="125" mass="13553">MFATFGFIALFAVLGAWARYGQTLLVQAAFGRGFPWATLSINVLGCFLMGFLFFETLERISVSPELRTGMLTGGLGAYTTFSTFSLETLVLFENGEAVKGLLYMFTSLFLCVGAAFAGAWISHST</sequence>
<keyword id="KW-0997">Cell inner membrane</keyword>
<keyword id="KW-1003">Cell membrane</keyword>
<keyword id="KW-0407">Ion channel</keyword>
<keyword id="KW-0406">Ion transport</keyword>
<keyword id="KW-0472">Membrane</keyword>
<keyword id="KW-0479">Metal-binding</keyword>
<keyword id="KW-0915">Sodium</keyword>
<keyword id="KW-0812">Transmembrane</keyword>
<keyword id="KW-1133">Transmembrane helix</keyword>
<keyword id="KW-0813">Transport</keyword>
<reference key="1">
    <citation type="submission" date="2008-08" db="EMBL/GenBank/DDBJ databases">
        <title>Complete sequence of Acidithiobacillus ferrooxidans ATCC 53993.</title>
        <authorList>
            <person name="Lucas S."/>
            <person name="Copeland A."/>
            <person name="Lapidus A."/>
            <person name="Glavina del Rio T."/>
            <person name="Dalin E."/>
            <person name="Tice H."/>
            <person name="Bruce D."/>
            <person name="Goodwin L."/>
            <person name="Pitluck S."/>
            <person name="Sims D."/>
            <person name="Brettin T."/>
            <person name="Detter J.C."/>
            <person name="Han C."/>
            <person name="Kuske C.R."/>
            <person name="Larimer F."/>
            <person name="Land M."/>
            <person name="Hauser L."/>
            <person name="Kyrpides N."/>
            <person name="Lykidis A."/>
            <person name="Borole A.P."/>
        </authorList>
    </citation>
    <scope>NUCLEOTIDE SEQUENCE [LARGE SCALE GENOMIC DNA]</scope>
    <source>
        <strain>ATCC 53993 / BNL-5-31</strain>
    </source>
</reference>
<organism>
    <name type="scientific">Acidithiobacillus ferrooxidans (strain ATCC 53993 / BNL-5-31)</name>
    <name type="common">Leptospirillum ferrooxidans (ATCC 53993)</name>
    <dbReference type="NCBI Taxonomy" id="380394"/>
    <lineage>
        <taxon>Bacteria</taxon>
        <taxon>Pseudomonadati</taxon>
        <taxon>Pseudomonadota</taxon>
        <taxon>Acidithiobacillia</taxon>
        <taxon>Acidithiobacillales</taxon>
        <taxon>Acidithiobacillaceae</taxon>
        <taxon>Acidithiobacillus</taxon>
    </lineage>
</organism>
<accession>B5EPU0</accession>
<gene>
    <name evidence="1" type="primary">fluC</name>
    <name evidence="1" type="synonym">crcB</name>
    <name type="ordered locus">Lferr_2541</name>
</gene>
<feature type="chain" id="PRO_1000189699" description="Fluoride-specific ion channel FluC">
    <location>
        <begin position="1"/>
        <end position="125"/>
    </location>
</feature>
<feature type="transmembrane region" description="Helical" evidence="1">
    <location>
        <begin position="1"/>
        <end position="21"/>
    </location>
</feature>
<feature type="transmembrane region" description="Helical" evidence="1">
    <location>
        <begin position="34"/>
        <end position="54"/>
    </location>
</feature>
<feature type="transmembrane region" description="Helical" evidence="1">
    <location>
        <begin position="72"/>
        <end position="92"/>
    </location>
</feature>
<feature type="transmembrane region" description="Helical" evidence="1">
    <location>
        <begin position="101"/>
        <end position="121"/>
    </location>
</feature>
<feature type="binding site" evidence="1">
    <location>
        <position position="76"/>
    </location>
    <ligand>
        <name>Na(+)</name>
        <dbReference type="ChEBI" id="CHEBI:29101"/>
        <note>structural</note>
    </ligand>
</feature>
<feature type="binding site" evidence="1">
    <location>
        <position position="79"/>
    </location>
    <ligand>
        <name>Na(+)</name>
        <dbReference type="ChEBI" id="CHEBI:29101"/>
        <note>structural</note>
    </ligand>
</feature>
<proteinExistence type="inferred from homology"/>
<comment type="function">
    <text evidence="1">Fluoride-specific ion channel. Important for reducing fluoride concentration in the cell, thus reducing its toxicity.</text>
</comment>
<comment type="catalytic activity">
    <reaction evidence="1">
        <text>fluoride(in) = fluoride(out)</text>
        <dbReference type="Rhea" id="RHEA:76159"/>
        <dbReference type="ChEBI" id="CHEBI:17051"/>
    </reaction>
    <physiologicalReaction direction="left-to-right" evidence="1">
        <dbReference type="Rhea" id="RHEA:76160"/>
    </physiologicalReaction>
</comment>
<comment type="activity regulation">
    <text evidence="1">Na(+) is not transported, but it plays an essential structural role and its presence is essential for fluoride channel function.</text>
</comment>
<comment type="subcellular location">
    <subcellularLocation>
        <location evidence="1">Cell inner membrane</location>
        <topology evidence="1">Multi-pass membrane protein</topology>
    </subcellularLocation>
</comment>
<comment type="similarity">
    <text evidence="1">Belongs to the fluoride channel Fluc/FEX (TC 1.A.43) family.</text>
</comment>
<dbReference type="EMBL" id="CP001132">
    <property type="protein sequence ID" value="ACH84735.1"/>
    <property type="molecule type" value="Genomic_DNA"/>
</dbReference>
<dbReference type="RefSeq" id="WP_009569543.1">
    <property type="nucleotide sequence ID" value="NC_011206.1"/>
</dbReference>
<dbReference type="SMR" id="B5EPU0"/>
<dbReference type="GeneID" id="65281940"/>
<dbReference type="KEGG" id="afe:Lferr_2541"/>
<dbReference type="eggNOG" id="COG0239">
    <property type="taxonomic scope" value="Bacteria"/>
</dbReference>
<dbReference type="HOGENOM" id="CLU_114342_3_0_6"/>
<dbReference type="GO" id="GO:0005886">
    <property type="term" value="C:plasma membrane"/>
    <property type="evidence" value="ECO:0007669"/>
    <property type="project" value="UniProtKB-SubCell"/>
</dbReference>
<dbReference type="GO" id="GO:0062054">
    <property type="term" value="F:fluoride channel activity"/>
    <property type="evidence" value="ECO:0007669"/>
    <property type="project" value="UniProtKB-UniRule"/>
</dbReference>
<dbReference type="GO" id="GO:0046872">
    <property type="term" value="F:metal ion binding"/>
    <property type="evidence" value="ECO:0007669"/>
    <property type="project" value="UniProtKB-KW"/>
</dbReference>
<dbReference type="GO" id="GO:0140114">
    <property type="term" value="P:cellular detoxification of fluoride"/>
    <property type="evidence" value="ECO:0007669"/>
    <property type="project" value="UniProtKB-UniRule"/>
</dbReference>
<dbReference type="HAMAP" id="MF_00454">
    <property type="entry name" value="FluC"/>
    <property type="match status" value="1"/>
</dbReference>
<dbReference type="InterPro" id="IPR003691">
    <property type="entry name" value="FluC"/>
</dbReference>
<dbReference type="NCBIfam" id="TIGR00494">
    <property type="entry name" value="crcB"/>
    <property type="match status" value="1"/>
</dbReference>
<dbReference type="PANTHER" id="PTHR28259">
    <property type="entry name" value="FLUORIDE EXPORT PROTEIN 1-RELATED"/>
    <property type="match status" value="1"/>
</dbReference>
<dbReference type="PANTHER" id="PTHR28259:SF1">
    <property type="entry name" value="FLUORIDE EXPORT PROTEIN 1-RELATED"/>
    <property type="match status" value="1"/>
</dbReference>
<dbReference type="Pfam" id="PF02537">
    <property type="entry name" value="CRCB"/>
    <property type="match status" value="1"/>
</dbReference>